<reference key="1">
    <citation type="journal article" date="2011" name="J. Bacteriol.">
        <title>Comparative genomics of 28 Salmonella enterica isolates: evidence for CRISPR-mediated adaptive sublineage evolution.</title>
        <authorList>
            <person name="Fricke W.F."/>
            <person name="Mammel M.K."/>
            <person name="McDermott P.F."/>
            <person name="Tartera C."/>
            <person name="White D.G."/>
            <person name="Leclerc J.E."/>
            <person name="Ravel J."/>
            <person name="Cebula T.A."/>
        </authorList>
    </citation>
    <scope>NUCLEOTIDE SEQUENCE [LARGE SCALE GENOMIC DNA]</scope>
    <source>
        <strain>SL483</strain>
    </source>
</reference>
<gene>
    <name evidence="1" type="primary">rplR</name>
    <name type="ordered locus">SeAg_B3620</name>
</gene>
<proteinExistence type="inferred from homology"/>
<protein>
    <recommendedName>
        <fullName evidence="1">Large ribosomal subunit protein uL18</fullName>
    </recommendedName>
    <alternativeName>
        <fullName evidence="2">50S ribosomal protein L18</fullName>
    </alternativeName>
</protein>
<keyword id="KW-0687">Ribonucleoprotein</keyword>
<keyword id="KW-0689">Ribosomal protein</keyword>
<keyword id="KW-0694">RNA-binding</keyword>
<keyword id="KW-0699">rRNA-binding</keyword>
<feature type="chain" id="PRO_1000142711" description="Large ribosomal subunit protein uL18">
    <location>
        <begin position="1"/>
        <end position="117"/>
    </location>
</feature>
<sequence length="117" mass="12770">MDKKSARIRRATRARRKLKELGATRLVVHRTPRHIYAQVIAPNGSEVLVAASTVEKAIAEQLKYTGNKDAAAAVGKAVAERALEKGIKDVSFDRSGFQYHGRVQALADAAREAGLQF</sequence>
<evidence type="ECO:0000255" key="1">
    <source>
        <dbReference type="HAMAP-Rule" id="MF_01337"/>
    </source>
</evidence>
<evidence type="ECO:0000305" key="2"/>
<dbReference type="EMBL" id="CP001138">
    <property type="protein sequence ID" value="ACH50159.1"/>
    <property type="molecule type" value="Genomic_DNA"/>
</dbReference>
<dbReference type="RefSeq" id="WP_000358956.1">
    <property type="nucleotide sequence ID" value="NC_011149.1"/>
</dbReference>
<dbReference type="SMR" id="B5F7S9"/>
<dbReference type="GeneID" id="93035747"/>
<dbReference type="KEGG" id="sea:SeAg_B3620"/>
<dbReference type="HOGENOM" id="CLU_098841_0_1_6"/>
<dbReference type="Proteomes" id="UP000008819">
    <property type="component" value="Chromosome"/>
</dbReference>
<dbReference type="GO" id="GO:0022625">
    <property type="term" value="C:cytosolic large ribosomal subunit"/>
    <property type="evidence" value="ECO:0007669"/>
    <property type="project" value="TreeGrafter"/>
</dbReference>
<dbReference type="GO" id="GO:0008097">
    <property type="term" value="F:5S rRNA binding"/>
    <property type="evidence" value="ECO:0007669"/>
    <property type="project" value="TreeGrafter"/>
</dbReference>
<dbReference type="GO" id="GO:0003735">
    <property type="term" value="F:structural constituent of ribosome"/>
    <property type="evidence" value="ECO:0007669"/>
    <property type="project" value="InterPro"/>
</dbReference>
<dbReference type="GO" id="GO:0006412">
    <property type="term" value="P:translation"/>
    <property type="evidence" value="ECO:0007669"/>
    <property type="project" value="UniProtKB-UniRule"/>
</dbReference>
<dbReference type="CDD" id="cd00432">
    <property type="entry name" value="Ribosomal_L18_L5e"/>
    <property type="match status" value="1"/>
</dbReference>
<dbReference type="FunFam" id="3.30.420.100:FF:000001">
    <property type="entry name" value="50S ribosomal protein L18"/>
    <property type="match status" value="1"/>
</dbReference>
<dbReference type="Gene3D" id="3.30.420.100">
    <property type="match status" value="1"/>
</dbReference>
<dbReference type="HAMAP" id="MF_01337_B">
    <property type="entry name" value="Ribosomal_uL18_B"/>
    <property type="match status" value="1"/>
</dbReference>
<dbReference type="InterPro" id="IPR004389">
    <property type="entry name" value="Ribosomal_uL18_bac-type"/>
</dbReference>
<dbReference type="InterPro" id="IPR005484">
    <property type="entry name" value="Ribosomal_uL18_bac/euk"/>
</dbReference>
<dbReference type="NCBIfam" id="TIGR00060">
    <property type="entry name" value="L18_bact"/>
    <property type="match status" value="1"/>
</dbReference>
<dbReference type="PANTHER" id="PTHR12899">
    <property type="entry name" value="39S RIBOSOMAL PROTEIN L18, MITOCHONDRIAL"/>
    <property type="match status" value="1"/>
</dbReference>
<dbReference type="PANTHER" id="PTHR12899:SF3">
    <property type="entry name" value="LARGE RIBOSOMAL SUBUNIT PROTEIN UL18M"/>
    <property type="match status" value="1"/>
</dbReference>
<dbReference type="Pfam" id="PF00861">
    <property type="entry name" value="Ribosomal_L18p"/>
    <property type="match status" value="1"/>
</dbReference>
<dbReference type="SUPFAM" id="SSF53137">
    <property type="entry name" value="Translational machinery components"/>
    <property type="match status" value="1"/>
</dbReference>
<organism>
    <name type="scientific">Salmonella agona (strain SL483)</name>
    <dbReference type="NCBI Taxonomy" id="454166"/>
    <lineage>
        <taxon>Bacteria</taxon>
        <taxon>Pseudomonadati</taxon>
        <taxon>Pseudomonadota</taxon>
        <taxon>Gammaproteobacteria</taxon>
        <taxon>Enterobacterales</taxon>
        <taxon>Enterobacteriaceae</taxon>
        <taxon>Salmonella</taxon>
    </lineage>
</organism>
<accession>B5F7S9</accession>
<name>RL18_SALA4</name>
<comment type="function">
    <text evidence="1">This is one of the proteins that bind and probably mediate the attachment of the 5S RNA into the large ribosomal subunit, where it forms part of the central protuberance.</text>
</comment>
<comment type="subunit">
    <text evidence="1">Part of the 50S ribosomal subunit; part of the 5S rRNA/L5/L18/L25 subcomplex. Contacts the 5S and 23S rRNAs.</text>
</comment>
<comment type="similarity">
    <text evidence="1">Belongs to the universal ribosomal protein uL18 family.</text>
</comment>